<accession>Q7ZAJ4</accession>
<dbReference type="EMBL" id="AE015929">
    <property type="protein sequence ID" value="AAO04525.1"/>
    <property type="molecule type" value="Genomic_DNA"/>
</dbReference>
<dbReference type="RefSeq" id="NP_764483.1">
    <property type="nucleotide sequence ID" value="NC_004461.1"/>
</dbReference>
<dbReference type="RefSeq" id="WP_002456225.1">
    <property type="nucleotide sequence ID" value="NC_004461.1"/>
</dbReference>
<dbReference type="SMR" id="Q7ZAJ4"/>
<dbReference type="GeneID" id="50018936"/>
<dbReference type="KEGG" id="sep:SE_0928"/>
<dbReference type="PATRIC" id="fig|176280.10.peg.903"/>
<dbReference type="eggNOG" id="COG4974">
    <property type="taxonomic scope" value="Bacteria"/>
</dbReference>
<dbReference type="HOGENOM" id="CLU_027562_9_0_9"/>
<dbReference type="OrthoDB" id="9801717at2"/>
<dbReference type="Proteomes" id="UP000001411">
    <property type="component" value="Chromosome"/>
</dbReference>
<dbReference type="GO" id="GO:0005737">
    <property type="term" value="C:cytoplasm"/>
    <property type="evidence" value="ECO:0007669"/>
    <property type="project" value="UniProtKB-SubCell"/>
</dbReference>
<dbReference type="GO" id="GO:0003677">
    <property type="term" value="F:DNA binding"/>
    <property type="evidence" value="ECO:0007669"/>
    <property type="project" value="UniProtKB-KW"/>
</dbReference>
<dbReference type="GO" id="GO:0009037">
    <property type="term" value="F:tyrosine-based site-specific recombinase activity"/>
    <property type="evidence" value="ECO:0007669"/>
    <property type="project" value="UniProtKB-UniRule"/>
</dbReference>
<dbReference type="GO" id="GO:0051301">
    <property type="term" value="P:cell division"/>
    <property type="evidence" value="ECO:0007669"/>
    <property type="project" value="UniProtKB-KW"/>
</dbReference>
<dbReference type="GO" id="GO:0007059">
    <property type="term" value="P:chromosome segregation"/>
    <property type="evidence" value="ECO:0007669"/>
    <property type="project" value="UniProtKB-UniRule"/>
</dbReference>
<dbReference type="GO" id="GO:0006313">
    <property type="term" value="P:DNA transposition"/>
    <property type="evidence" value="ECO:0007669"/>
    <property type="project" value="UniProtKB-UniRule"/>
</dbReference>
<dbReference type="CDD" id="cd00798">
    <property type="entry name" value="INT_XerDC_C"/>
    <property type="match status" value="1"/>
</dbReference>
<dbReference type="Gene3D" id="1.10.150.130">
    <property type="match status" value="1"/>
</dbReference>
<dbReference type="Gene3D" id="1.10.443.10">
    <property type="entry name" value="Intergrase catalytic core"/>
    <property type="match status" value="1"/>
</dbReference>
<dbReference type="HAMAP" id="MF_01808">
    <property type="entry name" value="Recomb_XerC_XerD"/>
    <property type="match status" value="1"/>
</dbReference>
<dbReference type="InterPro" id="IPR044068">
    <property type="entry name" value="CB"/>
</dbReference>
<dbReference type="InterPro" id="IPR011010">
    <property type="entry name" value="DNA_brk_join_enz"/>
</dbReference>
<dbReference type="InterPro" id="IPR013762">
    <property type="entry name" value="Integrase-like_cat_sf"/>
</dbReference>
<dbReference type="InterPro" id="IPR002104">
    <property type="entry name" value="Integrase_catalytic"/>
</dbReference>
<dbReference type="InterPro" id="IPR010998">
    <property type="entry name" value="Integrase_recombinase_N"/>
</dbReference>
<dbReference type="InterPro" id="IPR004107">
    <property type="entry name" value="Integrase_SAM-like_N"/>
</dbReference>
<dbReference type="InterPro" id="IPR011931">
    <property type="entry name" value="Recomb_XerC"/>
</dbReference>
<dbReference type="InterPro" id="IPR023009">
    <property type="entry name" value="Tyrosine_recombinase_XerC/XerD"/>
</dbReference>
<dbReference type="InterPro" id="IPR050090">
    <property type="entry name" value="Tyrosine_recombinase_XerCD"/>
</dbReference>
<dbReference type="NCBIfam" id="NF001399">
    <property type="entry name" value="PRK00283.1"/>
    <property type="match status" value="1"/>
</dbReference>
<dbReference type="NCBIfam" id="NF040815">
    <property type="entry name" value="recomb_XerA_Arch"/>
    <property type="match status" value="1"/>
</dbReference>
<dbReference type="NCBIfam" id="TIGR02224">
    <property type="entry name" value="recomb_XerC"/>
    <property type="match status" value="1"/>
</dbReference>
<dbReference type="PANTHER" id="PTHR30349">
    <property type="entry name" value="PHAGE INTEGRASE-RELATED"/>
    <property type="match status" value="1"/>
</dbReference>
<dbReference type="PANTHER" id="PTHR30349:SF77">
    <property type="entry name" value="TYROSINE RECOMBINASE XERC"/>
    <property type="match status" value="1"/>
</dbReference>
<dbReference type="Pfam" id="PF02899">
    <property type="entry name" value="Phage_int_SAM_1"/>
    <property type="match status" value="1"/>
</dbReference>
<dbReference type="Pfam" id="PF00589">
    <property type="entry name" value="Phage_integrase"/>
    <property type="match status" value="1"/>
</dbReference>
<dbReference type="SUPFAM" id="SSF56349">
    <property type="entry name" value="DNA breaking-rejoining enzymes"/>
    <property type="match status" value="1"/>
</dbReference>
<dbReference type="SUPFAM" id="SSF47823">
    <property type="entry name" value="lambda integrase-like, N-terminal domain"/>
    <property type="match status" value="1"/>
</dbReference>
<dbReference type="PROSITE" id="PS51900">
    <property type="entry name" value="CB"/>
    <property type="match status" value="1"/>
</dbReference>
<dbReference type="PROSITE" id="PS51898">
    <property type="entry name" value="TYR_RECOMBINASE"/>
    <property type="match status" value="1"/>
</dbReference>
<evidence type="ECO:0000255" key="1">
    <source>
        <dbReference type="HAMAP-Rule" id="MF_01808"/>
    </source>
</evidence>
<evidence type="ECO:0000255" key="2">
    <source>
        <dbReference type="PROSITE-ProRule" id="PRU01246"/>
    </source>
</evidence>
<evidence type="ECO:0000255" key="3">
    <source>
        <dbReference type="PROSITE-ProRule" id="PRU01248"/>
    </source>
</evidence>
<organism>
    <name type="scientific">Staphylococcus epidermidis (strain ATCC 12228 / FDA PCI 1200)</name>
    <dbReference type="NCBI Taxonomy" id="176280"/>
    <lineage>
        <taxon>Bacteria</taxon>
        <taxon>Bacillati</taxon>
        <taxon>Bacillota</taxon>
        <taxon>Bacilli</taxon>
        <taxon>Bacillales</taxon>
        <taxon>Staphylococcaceae</taxon>
        <taxon>Staphylococcus</taxon>
    </lineage>
</organism>
<keyword id="KW-0131">Cell cycle</keyword>
<keyword id="KW-0132">Cell division</keyword>
<keyword id="KW-0159">Chromosome partition</keyword>
<keyword id="KW-0963">Cytoplasm</keyword>
<keyword id="KW-0229">DNA integration</keyword>
<keyword id="KW-0233">DNA recombination</keyword>
<keyword id="KW-0238">DNA-binding</keyword>
<proteinExistence type="inferred from homology"/>
<gene>
    <name evidence="1" type="primary">xerC</name>
    <name type="ordered locus">SE_0928</name>
</gene>
<reference key="1">
    <citation type="journal article" date="2003" name="Mol. Microbiol.">
        <title>Genome-based analysis of virulence genes in a non-biofilm-forming Staphylococcus epidermidis strain (ATCC 12228).</title>
        <authorList>
            <person name="Zhang Y.-Q."/>
            <person name="Ren S.-X."/>
            <person name="Li H.-L."/>
            <person name="Wang Y.-X."/>
            <person name="Fu G."/>
            <person name="Yang J."/>
            <person name="Qin Z.-Q."/>
            <person name="Miao Y.-G."/>
            <person name="Wang W.-Y."/>
            <person name="Chen R.-S."/>
            <person name="Shen Y."/>
            <person name="Chen Z."/>
            <person name="Yuan Z.-H."/>
            <person name="Zhao G.-P."/>
            <person name="Qu D."/>
            <person name="Danchin A."/>
            <person name="Wen Y.-M."/>
        </authorList>
    </citation>
    <scope>NUCLEOTIDE SEQUENCE [LARGE SCALE GENOMIC DNA]</scope>
    <source>
        <strain>ATCC 12228 / FDA PCI 1200</strain>
    </source>
</reference>
<protein>
    <recommendedName>
        <fullName evidence="1">Tyrosine recombinase XerC</fullName>
    </recommendedName>
</protein>
<feature type="chain" id="PRO_0000095336" description="Tyrosine recombinase XerC">
    <location>
        <begin position="1"/>
        <end position="296"/>
    </location>
</feature>
<feature type="domain" description="Core-binding (CB)" evidence="3">
    <location>
        <begin position="1"/>
        <end position="84"/>
    </location>
</feature>
<feature type="domain" description="Tyr recombinase" evidence="2">
    <location>
        <begin position="105"/>
        <end position="286"/>
    </location>
</feature>
<feature type="active site" evidence="1">
    <location>
        <position position="145"/>
    </location>
</feature>
<feature type="active site" evidence="1">
    <location>
        <position position="169"/>
    </location>
</feature>
<feature type="active site" evidence="1">
    <location>
        <position position="238"/>
    </location>
</feature>
<feature type="active site" evidence="1">
    <location>
        <position position="241"/>
    </location>
</feature>
<feature type="active site" evidence="1">
    <location>
        <position position="264"/>
    </location>
</feature>
<feature type="active site" description="O-(3'-phospho-DNA)-tyrosine intermediate" evidence="1">
    <location>
        <position position="273"/>
    </location>
</feature>
<name>XERC_STAES</name>
<comment type="function">
    <text evidence="1">Site-specific tyrosine recombinase, which acts by catalyzing the cutting and rejoining of the recombining DNA molecules. The XerC-XerD complex is essential to convert dimers of the bacterial chromosome into monomers to permit their segregation at cell division. It also contributes to the segregational stability of plasmids.</text>
</comment>
<comment type="subunit">
    <text evidence="1">Forms a cyclic heterotetrameric complex composed of two molecules of XerC and two molecules of XerD.</text>
</comment>
<comment type="subcellular location">
    <subcellularLocation>
        <location evidence="1">Cytoplasm</location>
    </subcellularLocation>
</comment>
<comment type="similarity">
    <text evidence="1">Belongs to the 'phage' integrase family. XerC subfamily.</text>
</comment>
<sequence length="296" mass="35036">MDKIQETFLYMLKVERNFSEYTLKSYHDDLVQFNNFLEREHLQLETFEYKDARNYLAFLYSNQLKRTTVSRKISTLRTFYEFWMTQDNSIINPFVQLVHPKKEKYLPQFFYEEEMEALFQTVEHDNKKGIRDKVIIELLYATGIRVSELINIKLKDIDMNLPGVKVLGKGNKERFIPFGEFCRQSIERYLEEFQPKQLANHDYLIVNMKGDPITERGVRYVLNDVVKRTAGVNDIHPHKLRHTFATHLLNQGADLRTVQSLLGHVNLSTTGRYTHVSNQQLRKVYLNAHPRAKKGE</sequence>